<organism>
    <name type="scientific">Escherichia coli O1:K1 / APEC</name>
    <dbReference type="NCBI Taxonomy" id="405955"/>
    <lineage>
        <taxon>Bacteria</taxon>
        <taxon>Pseudomonadati</taxon>
        <taxon>Pseudomonadota</taxon>
        <taxon>Gammaproteobacteria</taxon>
        <taxon>Enterobacterales</taxon>
        <taxon>Enterobacteriaceae</taxon>
        <taxon>Escherichia</taxon>
    </lineage>
</organism>
<sequence length="131" mass="14798">MATVPTRSGSPRQLTTKQTGDAWEAQARRWLEGKGLRFIAANVNERGGEIDLIMREGRTTVFIEVRYRRSALYGGAAASVTRSKQHKLLQTARLWLARHNGSFDTVDCRFDVVAFTGNEVEWIKDAFNDHS</sequence>
<comment type="similarity">
    <text evidence="1">Belongs to the UPF0102 family.</text>
</comment>
<evidence type="ECO:0000255" key="1">
    <source>
        <dbReference type="HAMAP-Rule" id="MF_00048"/>
    </source>
</evidence>
<evidence type="ECO:0000256" key="2">
    <source>
        <dbReference type="SAM" id="MobiDB-lite"/>
    </source>
</evidence>
<keyword id="KW-1185">Reference proteome</keyword>
<proteinExistence type="inferred from homology"/>
<name>YRAN_ECOK1</name>
<feature type="chain" id="PRO_1000009215" description="UPF0102 protein YraN">
    <location>
        <begin position="1"/>
        <end position="131"/>
    </location>
</feature>
<feature type="region of interest" description="Disordered" evidence="2">
    <location>
        <begin position="1"/>
        <end position="21"/>
    </location>
</feature>
<feature type="compositionally biased region" description="Polar residues" evidence="2">
    <location>
        <begin position="1"/>
        <end position="19"/>
    </location>
</feature>
<accession>A1AG53</accession>
<protein>
    <recommendedName>
        <fullName evidence="1">UPF0102 protein YraN</fullName>
    </recommendedName>
</protein>
<dbReference type="EMBL" id="CP000468">
    <property type="protein sequence ID" value="ABJ02643.1"/>
    <property type="molecule type" value="Genomic_DNA"/>
</dbReference>
<dbReference type="RefSeq" id="WP_000246833.1">
    <property type="nucleotide sequence ID" value="NZ_CADILS010000003.1"/>
</dbReference>
<dbReference type="SMR" id="A1AG53"/>
<dbReference type="KEGG" id="ecv:APECO1_3282"/>
<dbReference type="HOGENOM" id="CLU_115353_1_0_6"/>
<dbReference type="Proteomes" id="UP000008216">
    <property type="component" value="Chromosome"/>
</dbReference>
<dbReference type="GO" id="GO:0003676">
    <property type="term" value="F:nucleic acid binding"/>
    <property type="evidence" value="ECO:0007669"/>
    <property type="project" value="InterPro"/>
</dbReference>
<dbReference type="CDD" id="cd20736">
    <property type="entry name" value="PoNe_Nuclease"/>
    <property type="match status" value="1"/>
</dbReference>
<dbReference type="Gene3D" id="3.40.1350.10">
    <property type="match status" value="1"/>
</dbReference>
<dbReference type="HAMAP" id="MF_00048">
    <property type="entry name" value="UPF0102"/>
    <property type="match status" value="1"/>
</dbReference>
<dbReference type="InterPro" id="IPR011335">
    <property type="entry name" value="Restrct_endonuc-II-like"/>
</dbReference>
<dbReference type="InterPro" id="IPR011856">
    <property type="entry name" value="tRNA_endonuc-like_dom_sf"/>
</dbReference>
<dbReference type="InterPro" id="IPR003509">
    <property type="entry name" value="UPF0102_YraN-like"/>
</dbReference>
<dbReference type="NCBIfam" id="NF009150">
    <property type="entry name" value="PRK12497.1-3"/>
    <property type="match status" value="1"/>
</dbReference>
<dbReference type="NCBIfam" id="TIGR00252">
    <property type="entry name" value="YraN family protein"/>
    <property type="match status" value="1"/>
</dbReference>
<dbReference type="PANTHER" id="PTHR34039">
    <property type="entry name" value="UPF0102 PROTEIN YRAN"/>
    <property type="match status" value="1"/>
</dbReference>
<dbReference type="PANTHER" id="PTHR34039:SF1">
    <property type="entry name" value="UPF0102 PROTEIN YRAN"/>
    <property type="match status" value="1"/>
</dbReference>
<dbReference type="Pfam" id="PF02021">
    <property type="entry name" value="UPF0102"/>
    <property type="match status" value="1"/>
</dbReference>
<dbReference type="SUPFAM" id="SSF52980">
    <property type="entry name" value="Restriction endonuclease-like"/>
    <property type="match status" value="1"/>
</dbReference>
<gene>
    <name evidence="1" type="primary">yraN</name>
    <name type="ordered locus">Ecok1_31490</name>
    <name type="ORF">APECO1_3282</name>
</gene>
<reference key="1">
    <citation type="journal article" date="2007" name="J. Bacteriol.">
        <title>The genome sequence of avian pathogenic Escherichia coli strain O1:K1:H7 shares strong similarities with human extraintestinal pathogenic E. coli genomes.</title>
        <authorList>
            <person name="Johnson T.J."/>
            <person name="Kariyawasam S."/>
            <person name="Wannemuehler Y."/>
            <person name="Mangiamele P."/>
            <person name="Johnson S.J."/>
            <person name="Doetkott C."/>
            <person name="Skyberg J.A."/>
            <person name="Lynne A.M."/>
            <person name="Johnson J.R."/>
            <person name="Nolan L.K."/>
        </authorList>
    </citation>
    <scope>NUCLEOTIDE SEQUENCE [LARGE SCALE GENOMIC DNA]</scope>
</reference>